<reference key="1">
    <citation type="journal article" date="2011" name="Appl. Environ. Microbiol.">
        <title>Molecular basis for mycophenolic acid biosynthesis in Penicillium brevicompactum.</title>
        <authorList>
            <person name="Regueira T.B."/>
            <person name="Kildegaard K.R."/>
            <person name="Hansen B.G."/>
            <person name="Mortensen U.H."/>
            <person name="Hertweck C."/>
            <person name="Nielsen J."/>
        </authorList>
    </citation>
    <scope>NUCLEOTIDE SEQUENCE [GENOMIC DNA]</scope>
    <scope>FUNCTION</scope>
    <source>
        <strain>IBT 23078</strain>
    </source>
</reference>
<reference key="2">
    <citation type="journal article" date="2012" name="Appl. Environ. Microbiol.">
        <title>Involvement of a natural fusion of a cytochrome p450 and a hydrolase in mycophenolic acid biosynthesis.</title>
        <authorList>
            <person name="Hansen B.G."/>
            <person name="Mnich E."/>
            <person name="Nielsen K.F."/>
            <person name="Nielsen J.B."/>
            <person name="Nielsen M.T."/>
            <person name="Mortensen U.H."/>
            <person name="Larsen T.O."/>
            <person name="Patil K.R."/>
        </authorList>
    </citation>
    <scope>FUNCTION</scope>
    <source>
        <strain>IBT23078</strain>
    </source>
</reference>
<reference key="3">
    <citation type="journal article" date="2015" name="ChemBioChem">
        <title>Functional characterization of MpaG', the O-methyltransferase involved in the biosynthesis of mycophenolic acid.</title>
        <authorList>
            <person name="Zhang W."/>
            <person name="Cao S."/>
            <person name="Qiu L."/>
            <person name="Qi F."/>
            <person name="Li Z."/>
            <person name="Yang Y."/>
            <person name="Huang S."/>
            <person name="Bai F."/>
            <person name="Liu C."/>
            <person name="Wan X."/>
            <person name="Li S."/>
        </authorList>
    </citation>
    <scope>FUNCTION</scope>
    <scope>CATALYTIC ACTIVITY</scope>
    <scope>MUTAGENESIS OF HIS-306; GLU-335 AND GLU-362</scope>
    <scope>ACTIVE SITE</scope>
    <scope>BIOPHYSICOCHEMICAL PROPERTIES</scope>
    <scope>PATHWAY</scope>
</reference>
<proteinExistence type="evidence at protein level"/>
<protein>
    <recommendedName>
        <fullName evidence="4">O-methyltransferase mpaG</fullName>
        <ecNumber evidence="3">2.1.1.-</ecNumber>
    </recommendedName>
    <alternativeName>
        <fullName evidence="4">Mycophenolic acid biosynthesis cluster protein G</fullName>
    </alternativeName>
</protein>
<feature type="chain" id="PRO_0000436575" description="O-methyltransferase mpaG">
    <location>
        <begin position="1"/>
        <end position="398"/>
    </location>
</feature>
<feature type="active site" description="Proton acceptor" evidence="2">
    <location>
        <position position="306"/>
    </location>
</feature>
<feature type="active site" evidence="3">
    <location>
        <position position="335"/>
    </location>
</feature>
<feature type="active site" evidence="3">
    <location>
        <position position="362"/>
    </location>
</feature>
<feature type="binding site" evidence="1">
    <location>
        <position position="144"/>
    </location>
    <ligand>
        <name>(4E,8E)-10-(4,6-dihydroxy-7-methyl-3-oxo-1,3-dihydro-2-benzofuran-5-yl)-4,8-dimethyldeca-4,8-dienoate</name>
        <dbReference type="ChEBI" id="CHEBI:167389"/>
    </ligand>
</feature>
<feature type="binding site" evidence="1">
    <location>
        <position position="144"/>
    </location>
    <ligand>
        <name>4-farnesyl-3,5-dihydroxy-6-methylphthalide</name>
        <dbReference type="ChEBI" id="CHEBI:167386"/>
    </ligand>
</feature>
<feature type="binding site" evidence="1">
    <location>
        <position position="144"/>
    </location>
    <ligand>
        <name>6-O-desmethylmycophenolate</name>
        <dbReference type="ChEBI" id="CHEBI:231832"/>
    </ligand>
</feature>
<feature type="binding site" evidence="1">
    <location>
        <position position="197"/>
    </location>
    <ligand>
        <name>S-adenosyl-L-homocysteine</name>
        <dbReference type="ChEBI" id="CHEBI:57856"/>
    </ligand>
</feature>
<feature type="binding site" evidence="1">
    <location>
        <position position="199"/>
    </location>
    <ligand>
        <name>(4E,8E)-10-(4,6-dihydroxy-7-methyl-3-oxo-1,3-dihydro-2-benzofuran-5-yl)-4,8-dimethyldeca-4,8-dienoate</name>
        <dbReference type="ChEBI" id="CHEBI:167389"/>
    </ligand>
</feature>
<feature type="binding site" evidence="1">
    <location>
        <position position="199"/>
    </location>
    <ligand>
        <name>4-farnesyl-3,5-dihydroxy-6-methylphthalide</name>
        <dbReference type="ChEBI" id="CHEBI:167386"/>
    </ligand>
</feature>
<feature type="binding site" evidence="1">
    <location>
        <position position="199"/>
    </location>
    <ligand>
        <name>6-O-desmethylmycophenolate</name>
        <dbReference type="ChEBI" id="CHEBI:231832"/>
    </ligand>
</feature>
<feature type="binding site" evidence="1">
    <location>
        <position position="203"/>
    </location>
    <ligand>
        <name>S-adenosyl-L-homocysteine</name>
        <dbReference type="ChEBI" id="CHEBI:57856"/>
    </ligand>
</feature>
<feature type="binding site" evidence="1">
    <location>
        <position position="237"/>
    </location>
    <ligand>
        <name>S-adenosyl-L-homocysteine</name>
        <dbReference type="ChEBI" id="CHEBI:57856"/>
    </ligand>
</feature>
<feature type="binding site" evidence="1">
    <location>
        <position position="239"/>
    </location>
    <ligand>
        <name>S-adenosyl-L-homocysteine</name>
        <dbReference type="ChEBI" id="CHEBI:57856"/>
    </ligand>
</feature>
<feature type="binding site" evidence="1">
    <location>
        <position position="244"/>
    </location>
    <ligand>
        <name>S-adenosyl-L-homocysteine</name>
        <dbReference type="ChEBI" id="CHEBI:57856"/>
    </ligand>
</feature>
<feature type="binding site" evidence="1">
    <location>
        <position position="245"/>
    </location>
    <ligand>
        <name>S-adenosyl-L-homocysteine</name>
        <dbReference type="ChEBI" id="CHEBI:57856"/>
    </ligand>
</feature>
<feature type="binding site" evidence="1">
    <location>
        <position position="264"/>
    </location>
    <ligand>
        <name>S-adenosyl-L-homocysteine</name>
        <dbReference type="ChEBI" id="CHEBI:57856"/>
    </ligand>
</feature>
<feature type="binding site" evidence="2">
    <location>
        <position position="264"/>
    </location>
    <ligand>
        <name>S-adenosyl-L-methionine</name>
        <dbReference type="ChEBI" id="CHEBI:59789"/>
    </ligand>
</feature>
<feature type="binding site" evidence="1">
    <location>
        <position position="265"/>
    </location>
    <ligand>
        <name>(4E,8E)-10-(4,6-dihydroxy-7-methyl-3-oxo-1,3-dihydro-2-benzofuran-5-yl)-4,8-dimethyldeca-4,8-dienoate</name>
        <dbReference type="ChEBI" id="CHEBI:167389"/>
    </ligand>
</feature>
<feature type="binding site" evidence="1">
    <location>
        <position position="265"/>
    </location>
    <ligand>
        <name>6-O-desmethylmycophenolate</name>
        <dbReference type="ChEBI" id="CHEBI:231832"/>
    </ligand>
</feature>
<feature type="binding site" evidence="1">
    <location>
        <position position="265"/>
    </location>
    <ligand>
        <name>S-adenosyl-L-homocysteine</name>
        <dbReference type="ChEBI" id="CHEBI:57856"/>
    </ligand>
</feature>
<feature type="binding site" evidence="1">
    <location>
        <position position="267"/>
    </location>
    <ligand>
        <name>(4E,8E)-10-(4,6-dihydroxy-7-methyl-3-oxo-1,3-dihydro-2-benzofuran-5-yl)-4,8-dimethyldeca-4,8-dienoate</name>
        <dbReference type="ChEBI" id="CHEBI:167389"/>
    </ligand>
</feature>
<feature type="binding site" evidence="1">
    <location>
        <position position="286"/>
    </location>
    <ligand>
        <name>S-adenosyl-L-homocysteine</name>
        <dbReference type="ChEBI" id="CHEBI:57856"/>
    </ligand>
</feature>
<feature type="binding site" evidence="1">
    <location>
        <position position="287"/>
    </location>
    <ligand>
        <name>S-adenosyl-L-homocysteine</name>
        <dbReference type="ChEBI" id="CHEBI:57856"/>
    </ligand>
</feature>
<feature type="binding site" evidence="1">
    <location>
        <position position="302"/>
    </location>
    <ligand>
        <name>S-adenosyl-L-homocysteine</name>
        <dbReference type="ChEBI" id="CHEBI:57856"/>
    </ligand>
</feature>
<feature type="binding site" evidence="1">
    <location>
        <position position="303"/>
    </location>
    <ligand>
        <name>(4E,8E)-10-(4,6-dihydroxy-7-methyl-3-oxo-1,3-dihydro-2-benzofuran-5-yl)-4,8-dimethyldeca-4,8-dienoate</name>
        <dbReference type="ChEBI" id="CHEBI:167389"/>
    </ligand>
</feature>
<feature type="binding site" evidence="1">
    <location>
        <position position="303"/>
    </location>
    <ligand>
        <name>4-farnesyl-3,5-dihydroxy-6-methylphthalide</name>
        <dbReference type="ChEBI" id="CHEBI:167386"/>
    </ligand>
</feature>
<feature type="binding site" evidence="1">
    <location>
        <position position="303"/>
    </location>
    <ligand>
        <name>6-O-desmethylmycophenolate</name>
        <dbReference type="ChEBI" id="CHEBI:231832"/>
    </ligand>
</feature>
<feature type="mutagenesis site" description="Completely looses methyltransferase activity towards demethylmycophenolic acid (DMMPA)." evidence="3">
    <original>H</original>
    <variation>A</variation>
    <location>
        <position position="306"/>
    </location>
</feature>
<feature type="mutagenesis site" description="Completely looses methyltransferase activity towards demethylmycophenolic acid (DMMPA)." evidence="3">
    <original>E</original>
    <variation>A</variation>
    <location>
        <position position="335"/>
    </location>
</feature>
<feature type="mutagenesis site" description="Completely looses methyltransferase activity towards demethylmycophenolic acid (DMMPA)." evidence="3">
    <original>E</original>
    <variation>A</variation>
    <location>
        <position position="362"/>
    </location>
</feature>
<organism>
    <name type="scientific">Penicillium brevicompactum</name>
    <dbReference type="NCBI Taxonomy" id="5074"/>
    <lineage>
        <taxon>Eukaryota</taxon>
        <taxon>Fungi</taxon>
        <taxon>Dikarya</taxon>
        <taxon>Ascomycota</taxon>
        <taxon>Pezizomycotina</taxon>
        <taxon>Eurotiomycetes</taxon>
        <taxon>Eurotiomycetidae</taxon>
        <taxon>Eurotiales</taxon>
        <taxon>Aspergillaceae</taxon>
        <taxon>Penicillium</taxon>
    </lineage>
</organism>
<evidence type="ECO:0000250" key="1">
    <source>
        <dbReference type="UniProtKB" id="A0A0B5L781"/>
    </source>
</evidence>
<evidence type="ECO:0000255" key="2">
    <source>
        <dbReference type="PROSITE-ProRule" id="PRU01020"/>
    </source>
</evidence>
<evidence type="ECO:0000269" key="3">
    <source>
    </source>
</evidence>
<evidence type="ECO:0000303" key="4">
    <source>
    </source>
</evidence>
<evidence type="ECO:0000305" key="5"/>
<evidence type="ECO:0000305" key="6">
    <source>
    </source>
</evidence>
<evidence type="ECO:0000305" key="7">
    <source>
    </source>
</evidence>
<comment type="function">
    <text evidence="3 6 7">O-methyltransferase; part of the gene cluster that mediates the biosynthesis of mycophenolic acid (MPA), the first isolated antibiotic natural product in the world obtained from a culture of Penicillium brevicompactum in 1893 (PubMed:25630520). MpaG methylates farnesyl-DHMP-3C (FDHMP-3C) to yield MFDHMP-3C (PubMed:25630520). The first step of the pathway is the synthesis of 5-methylorsellinic acid (5MOA) by the cytosolic polyketide synthase mpaC. 5MOA is then converted to the phthalide compound 5,7-dihydroxy-4,6-dimethylphthalide (DHMP) by the endoplasmic reticulum-bound cytochrome P450 monooxygenase mpaDE. MpaDE first catalyzes hydroxylation of 5-MOA to 4,6-dihydroxy-2-(hydroxymethyl)-3-methylbenzoic acid (DHMB). MpaDE then acts as a lactone synthase that catalyzes the ring closure to convert DHMB into DHMP. The next step is the prenylation of DHMP by the Golgi apparatus-associated prenyltransferase mpaA to yield farnesyl-DHMP (FDHMP). The ER-bound oxygenase mpaB then mediates the oxidative cleavage the C19-C20 double bond in FDHMP to yield FDHMP-3C via a mycophenolic aldehyde intermediate. The O-methyltransferase mpaG catalyzes the methylation of FDHMP-3C to yield MFDHMP-3C. MpaG and mpaB can also switch the order in which they act and, in this case, the conversion of FDHMP to MFDHMP-3C can take place via 5-O-methyl-FDHMP (MFDHMP). After the cytosolic methylation of FDHMP-3C, MFDHMP-3C enters into peroxisomes probably via free diffusion due to its low molecular weight. Upon a peroxisomal CoA ligation reaction, catalyzed by a beta-oxidation component enzyme acyl-CoA ligase ACL891, MFDHMP-3C-CoA would then be restricted to peroxisomes for the following beta-oxidation pathway steps. The peroxisomal beta-oxidation machinery than converts MFDHMP-3C-CoA into MPA_CoA, via a beta-oxidation chain-shortening process. Finally mpaH acts as a peroxisomal acyl-CoA hydrolase with high substrate specificity toward MPA-CoA to release the final product MPA. MpaH can also hydrolyze DMMPA-CoA to release demethylmycophenolic acid (DMMPA) that is further converted to MPA by mpaG (Probable) (PubMed:21398490, PubMed:22544261).</text>
</comment>
<comment type="catalytic activity">
    <reaction evidence="3">
        <text>(4E,8E)-10-(4,6-dihydroxy-7-methyl-3-oxo-1,3-dihydro-2-benzofuran-5-yl)-4,8-dimethyldeca-4,8-dienoate + S-adenosyl-L-methionine = (4E,8E)-10-(4-hydroxy-6-methoxy-7-methyl-3-oxo-1,3-dihydro-2-benzofuran-5-yl)-4,8-dimethyldeca-4,8-dienoate + S-adenosyl-L-homocysteine + H(+)</text>
        <dbReference type="Rhea" id="RHEA:66696"/>
        <dbReference type="ChEBI" id="CHEBI:15378"/>
        <dbReference type="ChEBI" id="CHEBI:57856"/>
        <dbReference type="ChEBI" id="CHEBI:59789"/>
        <dbReference type="ChEBI" id="CHEBI:167389"/>
        <dbReference type="ChEBI" id="CHEBI:167390"/>
    </reaction>
    <physiologicalReaction direction="left-to-right" evidence="3">
        <dbReference type="Rhea" id="RHEA:66697"/>
    </physiologicalReaction>
</comment>
<comment type="catalytic activity">
    <reaction evidence="1">
        <text>4-farnesyl-3,5-dihydroxy-6-methylphthalide + S-adenosyl-L-methionine = 4-farnesyl-3,5-dihydroxy-6-methoxylphthalide + S-adenosyl-L-homocysteine + H(+)</text>
        <dbReference type="Rhea" id="RHEA:81847"/>
        <dbReference type="ChEBI" id="CHEBI:15378"/>
        <dbReference type="ChEBI" id="CHEBI:57856"/>
        <dbReference type="ChEBI" id="CHEBI:59789"/>
        <dbReference type="ChEBI" id="CHEBI:167386"/>
        <dbReference type="ChEBI" id="CHEBI:231833"/>
    </reaction>
    <physiologicalReaction direction="left-to-right" evidence="1">
        <dbReference type="Rhea" id="RHEA:81848"/>
    </physiologicalReaction>
</comment>
<comment type="catalytic activity">
    <reaction evidence="1">
        <text>6-O-desmethylmycophenolate + S-adenosyl-L-methionine = mycophenolate + S-adenosyl-L-homocysteine + H(+)</text>
        <dbReference type="Rhea" id="RHEA:81843"/>
        <dbReference type="ChEBI" id="CHEBI:15378"/>
        <dbReference type="ChEBI" id="CHEBI:57856"/>
        <dbReference type="ChEBI" id="CHEBI:59789"/>
        <dbReference type="ChEBI" id="CHEBI:62932"/>
        <dbReference type="ChEBI" id="CHEBI:231832"/>
    </reaction>
    <physiologicalReaction direction="left-to-right" evidence="1">
        <dbReference type="Rhea" id="RHEA:81844"/>
    </physiologicalReaction>
</comment>
<comment type="biophysicochemical properties">
    <kinetics>
        <KM evidence="3">51.5 uM for demethylmycophenolic acid (DMMPA)</KM>
    </kinetics>
    <phDependence>
        <text evidence="3">Optimum pH is 8.0.</text>
    </phDependence>
    <temperatureDependence>
        <text evidence="3">Optimum temperature is 45 degrees Celsius.</text>
    </temperatureDependence>
</comment>
<comment type="pathway">
    <text evidence="3">Secondary metabolite biosynthesis; terpenoid biosynthesis.</text>
</comment>
<comment type="subunit">
    <text evidence="1">Homodimer.</text>
</comment>
<comment type="subcellular location">
    <subcellularLocation>
        <location evidence="1">Cytoplasm</location>
        <location evidence="1">Cytosol</location>
    </subcellularLocation>
</comment>
<comment type="similarity">
    <text evidence="5">Belongs to the class I-like SAM-binding methyltransferase superfamily. Cation-independent O-methyltransferase family. COMT subfamily.</text>
</comment>
<dbReference type="EC" id="2.1.1.-" evidence="3"/>
<dbReference type="EMBL" id="HQ731031">
    <property type="protein sequence ID" value="ADY00134.1"/>
    <property type="molecule type" value="Genomic_DNA"/>
</dbReference>
<dbReference type="SMR" id="F1DBB3"/>
<dbReference type="UniPathway" id="UPA00213"/>
<dbReference type="GO" id="GO:0005829">
    <property type="term" value="C:cytosol"/>
    <property type="evidence" value="ECO:0000250"/>
    <property type="project" value="GO_Central"/>
</dbReference>
<dbReference type="GO" id="GO:0008168">
    <property type="term" value="F:methyltransferase activity"/>
    <property type="evidence" value="ECO:0000250"/>
    <property type="project" value="GO_Central"/>
</dbReference>
<dbReference type="GO" id="GO:0008171">
    <property type="term" value="F:O-methyltransferase activity"/>
    <property type="evidence" value="ECO:0007669"/>
    <property type="project" value="InterPro"/>
</dbReference>
<dbReference type="GO" id="GO:0032259">
    <property type="term" value="P:methylation"/>
    <property type="evidence" value="ECO:0007669"/>
    <property type="project" value="UniProtKB-KW"/>
</dbReference>
<dbReference type="GO" id="GO:0140722">
    <property type="term" value="P:mycophenolic acid biosynthetic process"/>
    <property type="evidence" value="ECO:0000250"/>
    <property type="project" value="GO_Central"/>
</dbReference>
<dbReference type="GO" id="GO:0016114">
    <property type="term" value="P:terpenoid biosynthetic process"/>
    <property type="evidence" value="ECO:0007669"/>
    <property type="project" value="UniProtKB-UniPathway"/>
</dbReference>
<dbReference type="Gene3D" id="3.40.50.150">
    <property type="entry name" value="Vaccinia Virus protein VP39"/>
    <property type="match status" value="1"/>
</dbReference>
<dbReference type="Gene3D" id="1.10.10.10">
    <property type="entry name" value="Winged helix-like DNA-binding domain superfamily/Winged helix DNA-binding domain"/>
    <property type="match status" value="1"/>
</dbReference>
<dbReference type="InterPro" id="IPR016461">
    <property type="entry name" value="COMT-like"/>
</dbReference>
<dbReference type="InterPro" id="IPR001077">
    <property type="entry name" value="O_MeTrfase_dom"/>
</dbReference>
<dbReference type="InterPro" id="IPR029063">
    <property type="entry name" value="SAM-dependent_MTases_sf"/>
</dbReference>
<dbReference type="InterPro" id="IPR036388">
    <property type="entry name" value="WH-like_DNA-bd_sf"/>
</dbReference>
<dbReference type="InterPro" id="IPR036390">
    <property type="entry name" value="WH_DNA-bd_sf"/>
</dbReference>
<dbReference type="PANTHER" id="PTHR43712:SF1">
    <property type="entry name" value="HYPOTHETICAL O-METHYLTRANSFERASE (EUROFUNG)-RELATED"/>
    <property type="match status" value="1"/>
</dbReference>
<dbReference type="PANTHER" id="PTHR43712">
    <property type="entry name" value="PUTATIVE (AFU_ORTHOLOGUE AFUA_4G14580)-RELATED"/>
    <property type="match status" value="1"/>
</dbReference>
<dbReference type="Pfam" id="PF00891">
    <property type="entry name" value="Methyltransf_2"/>
    <property type="match status" value="1"/>
</dbReference>
<dbReference type="PIRSF" id="PIRSF005739">
    <property type="entry name" value="O-mtase"/>
    <property type="match status" value="1"/>
</dbReference>
<dbReference type="SUPFAM" id="SSF53335">
    <property type="entry name" value="S-adenosyl-L-methionine-dependent methyltransferases"/>
    <property type="match status" value="1"/>
</dbReference>
<dbReference type="SUPFAM" id="SSF46785">
    <property type="entry name" value="Winged helix' DNA-binding domain"/>
    <property type="match status" value="1"/>
</dbReference>
<dbReference type="PROSITE" id="PS00092">
    <property type="entry name" value="N6_MTASE"/>
    <property type="match status" value="1"/>
</dbReference>
<dbReference type="PROSITE" id="PS51683">
    <property type="entry name" value="SAM_OMT_II"/>
    <property type="match status" value="1"/>
</dbReference>
<sequence>MSAASPASIIQELASAAKQYENNESGAREALIAQSRALIASLEVPSEFIQHTFWSQPALSAIVRLATDVNLFQYLKDAQEEGLSAEALASKTGMDVSLFARLARHLVAMNVITSRNGVFYGTALSNGLAAENYQQSIRFCHDVSRPSFGAFPSFFKGNGYKTPALGTTDGPFQSAHKVDISFPQWLVGNPPYLQYFNSYMSAYRAGKPNWCDNGFYPVADRLLNGFDASVSDVLLVDVGGGRGHDIATFGSQFSPLPGRLVLQDREQVINSIPADESRQFEATTHDIFTTQPVKNARAYYMHSVPHGFGDEDAVKIMANLVPALAKGYSRVLLNEIVVDEESPVMSATNMDLIMLAHMGAKERTEADWRSILTRAGLKVVNIYSYPGVAESLIEAELA</sequence>
<accession>F1DBB3</accession>
<name>MPAG_PENBR</name>
<keyword id="KW-0963">Cytoplasm</keyword>
<keyword id="KW-0489">Methyltransferase</keyword>
<keyword id="KW-0949">S-adenosyl-L-methionine</keyword>
<keyword id="KW-0808">Transferase</keyword>
<gene>
    <name evidence="4" type="primary">mpaG</name>
</gene>